<accession>Q8CVR2</accession>
<gene>
    <name evidence="1" type="primary">nanM1</name>
    <name type="ordered locus">c3634</name>
</gene>
<sequence length="372" mass="40962">MITMKVKNFIYLPFCLFIGTSVAGALPEIPEPFKYGVGGIENGKIYIGLGSLGNNWYMIDTNQSEKKWTKIAQWPTVPREQATATIIDGKIYVFGGIGKDTSGVITLQKDVYSYDIAKDKWEKLMTRPPVSLAGHVSFIHNGHAVSTGGVNENIFNGYFSDVELSKGNSALTEKVNRDYFSKPADDYFLNNHIISYDPSKNQWKNLGTTPFPGTAGSSVIFAEQQIYILGGERKPGLRSVRSWTGELSHDRIKWSELPPVASPEGVSGAYASVIDGNIFLAGGAYFPGAAEKYSNGEYWSHKGLDKAYSKEIYQLIKNDWKKVGSLPEGLAYGVSLPWQGGMLILGGEKKDGKAVSDVIYLKKNDKQIKIVK</sequence>
<keyword id="KW-0119">Carbohydrate metabolism</keyword>
<keyword id="KW-0413">Isomerase</keyword>
<keyword id="KW-0880">Kelch repeat</keyword>
<keyword id="KW-0574">Periplasm</keyword>
<keyword id="KW-1185">Reference proteome</keyword>
<keyword id="KW-0677">Repeat</keyword>
<keyword id="KW-0732">Signal</keyword>
<reference key="1">
    <citation type="journal article" date="2002" name="Proc. Natl. Acad. Sci. U.S.A.">
        <title>Extensive mosaic structure revealed by the complete genome sequence of uropathogenic Escherichia coli.</title>
        <authorList>
            <person name="Welch R.A."/>
            <person name="Burland V."/>
            <person name="Plunkett G. III"/>
            <person name="Redford P."/>
            <person name="Roesch P."/>
            <person name="Rasko D."/>
            <person name="Buckles E.L."/>
            <person name="Liou S.-R."/>
            <person name="Boutin A."/>
            <person name="Hackett J."/>
            <person name="Stroud D."/>
            <person name="Mayhew G.F."/>
            <person name="Rose D.J."/>
            <person name="Zhou S."/>
            <person name="Schwartz D.C."/>
            <person name="Perna N.T."/>
            <person name="Mobley H.L.T."/>
            <person name="Donnenberg M.S."/>
            <person name="Blattner F.R."/>
        </authorList>
    </citation>
    <scope>NUCLEOTIDE SEQUENCE [LARGE SCALE GENOMIC DNA]</scope>
    <source>
        <strain>CFT073 / ATCC 700928 / UPEC</strain>
    </source>
</reference>
<comment type="function">
    <text evidence="1">Converts alpha-N-acetylneuranimic acid (Neu5Ac) to the beta-anomer, accelerating the equilibrium between the alpha- and beta-anomers. Probably facilitates sialidase-negative bacteria to compete successfully for limited amounts of extracellular Neu5Ac, which is likely taken up in the beta-anomer. In addition, the rapid removal of sialic acid from solution might be advantageous to the bacterium to damp down host responses.</text>
</comment>
<comment type="catalytic activity">
    <reaction evidence="1">
        <text>N-acetyl-alpha-neuraminate = N-acetyl-beta-neuraminate</text>
        <dbReference type="Rhea" id="RHEA:25233"/>
        <dbReference type="ChEBI" id="CHEBI:58705"/>
        <dbReference type="ChEBI" id="CHEBI:58770"/>
        <dbReference type="EC" id="5.1.3.24"/>
    </reaction>
</comment>
<comment type="subunit">
    <text evidence="1">Homodimer.</text>
</comment>
<comment type="subcellular location">
    <subcellularLocation>
        <location evidence="1">Periplasm</location>
    </subcellularLocation>
</comment>
<comment type="similarity">
    <text evidence="1">Belongs to the NanM family.</text>
</comment>
<organism>
    <name type="scientific">Escherichia coli O6:H1 (strain CFT073 / ATCC 700928 / UPEC)</name>
    <dbReference type="NCBI Taxonomy" id="199310"/>
    <lineage>
        <taxon>Bacteria</taxon>
        <taxon>Pseudomonadati</taxon>
        <taxon>Pseudomonadota</taxon>
        <taxon>Gammaproteobacteria</taxon>
        <taxon>Enterobacterales</taxon>
        <taxon>Enterobacteriaceae</taxon>
        <taxon>Escherichia</taxon>
    </lineage>
</organism>
<proteinExistence type="inferred from homology"/>
<name>NANM1_ECOL6</name>
<evidence type="ECO:0000255" key="1">
    <source>
        <dbReference type="HAMAP-Rule" id="MF_01195"/>
    </source>
</evidence>
<protein>
    <recommendedName>
        <fullName evidence="1">N-acetylneuraminate epimerase 1</fullName>
        <ecNumber evidence="1">5.1.3.24</ecNumber>
    </recommendedName>
    <alternativeName>
        <fullName evidence="1">N-acetylneuraminate mutarotase 1</fullName>
        <shortName evidence="1">Neu5Ac mutarotase 1</shortName>
    </alternativeName>
    <alternativeName>
        <fullName evidence="1">Sialic acid epimerase 1</fullName>
    </alternativeName>
</protein>
<feature type="signal peptide" evidence="1">
    <location>
        <begin position="1"/>
        <end position="25"/>
    </location>
</feature>
<feature type="chain" id="PRO_0000333057" description="N-acetylneuraminate epimerase 1">
    <location>
        <begin position="26"/>
        <end position="372"/>
    </location>
</feature>
<feature type="repeat" description="Kelch 1">
    <location>
        <begin position="44"/>
        <end position="88"/>
    </location>
</feature>
<feature type="repeat" description="Kelch 2">
    <location>
        <begin position="90"/>
        <end position="141"/>
    </location>
</feature>
<feature type="repeat" description="Kelch 3">
    <location>
        <begin position="143"/>
        <end position="177"/>
    </location>
</feature>
<feature type="repeat" description="Kelch 4">
    <location>
        <begin position="178"/>
        <end position="223"/>
    </location>
</feature>
<feature type="repeat" description="Kelch 5">
    <location>
        <begin position="226"/>
        <end position="269"/>
    </location>
</feature>
<feature type="repeat" description="Kelch 6">
    <location>
        <begin position="291"/>
        <end position="340"/>
    </location>
</feature>
<feature type="repeat" description="Kelch 7">
    <location>
        <begin position="342"/>
        <end position="371"/>
    </location>
</feature>
<feature type="active site" description="Proton acceptor" evidence="1">
    <location>
        <position position="232"/>
    </location>
</feature>
<dbReference type="EC" id="5.1.3.24" evidence="1"/>
<dbReference type="EMBL" id="AE014075">
    <property type="protein sequence ID" value="AAN82082.1"/>
    <property type="molecule type" value="Genomic_DNA"/>
</dbReference>
<dbReference type="SMR" id="Q8CVR2"/>
<dbReference type="STRING" id="199310.c3634"/>
<dbReference type="KEGG" id="ecc:c3634"/>
<dbReference type="eggNOG" id="COG3055">
    <property type="taxonomic scope" value="Bacteria"/>
</dbReference>
<dbReference type="HOGENOM" id="CLU_061535_0_0_6"/>
<dbReference type="BioCyc" id="ECOL199310:C3634-MONOMER"/>
<dbReference type="Proteomes" id="UP000001410">
    <property type="component" value="Chromosome"/>
</dbReference>
<dbReference type="GO" id="GO:0042597">
    <property type="term" value="C:periplasmic space"/>
    <property type="evidence" value="ECO:0007669"/>
    <property type="project" value="UniProtKB-SubCell"/>
</dbReference>
<dbReference type="GO" id="GO:0016857">
    <property type="term" value="F:racemase and epimerase activity, acting on carbohydrates and derivatives"/>
    <property type="evidence" value="ECO:0007669"/>
    <property type="project" value="UniProtKB-UniRule"/>
</dbReference>
<dbReference type="Gene3D" id="2.120.10.80">
    <property type="entry name" value="Kelch-type beta propeller"/>
    <property type="match status" value="2"/>
</dbReference>
<dbReference type="HAMAP" id="MF_01195">
    <property type="entry name" value="NanM"/>
    <property type="match status" value="1"/>
</dbReference>
<dbReference type="InterPro" id="IPR015915">
    <property type="entry name" value="Kelch-typ_b-propeller"/>
</dbReference>
<dbReference type="InterPro" id="IPR056734">
    <property type="entry name" value="NANM"/>
</dbReference>
<dbReference type="InterPro" id="IPR019936">
    <property type="entry name" value="NanM_proteobact"/>
</dbReference>
<dbReference type="NCBIfam" id="TIGR03547">
    <property type="entry name" value="muta_rot_YjhT"/>
    <property type="match status" value="1"/>
</dbReference>
<dbReference type="NCBIfam" id="NF010730">
    <property type="entry name" value="PRK14131.1"/>
    <property type="match status" value="1"/>
</dbReference>
<dbReference type="PANTHER" id="PTHR45632:SF3">
    <property type="entry name" value="KELCH-LIKE PROTEIN 32"/>
    <property type="match status" value="1"/>
</dbReference>
<dbReference type="PANTHER" id="PTHR45632">
    <property type="entry name" value="LD33804P"/>
    <property type="match status" value="1"/>
</dbReference>
<dbReference type="Pfam" id="PF24996">
    <property type="entry name" value="NANM"/>
    <property type="match status" value="1"/>
</dbReference>
<dbReference type="SUPFAM" id="SSF117281">
    <property type="entry name" value="Kelch motif"/>
    <property type="match status" value="1"/>
</dbReference>